<accession>Q8K943</accession>
<feature type="chain" id="PRO_0000075365" description="FKBP-type peptidyl-prolyl cis-trans isomerase FkpA">
    <location>
        <begin position="1"/>
        <end position="252"/>
    </location>
</feature>
<feature type="domain" description="PPIase FKBP-type" evidence="1">
    <location>
        <begin position="165"/>
        <end position="252"/>
    </location>
</feature>
<dbReference type="EC" id="5.2.1.8"/>
<dbReference type="EMBL" id="AE013218">
    <property type="protein sequence ID" value="AAM68057.1"/>
    <property type="molecule type" value="Genomic_DNA"/>
</dbReference>
<dbReference type="RefSeq" id="WP_011054023.1">
    <property type="nucleotide sequence ID" value="NC_004061.1"/>
</dbReference>
<dbReference type="SMR" id="Q8K943"/>
<dbReference type="STRING" id="198804.BUsg_514"/>
<dbReference type="GeneID" id="93003989"/>
<dbReference type="KEGG" id="bas:BUsg_514"/>
<dbReference type="eggNOG" id="COG0545">
    <property type="taxonomic scope" value="Bacteria"/>
</dbReference>
<dbReference type="HOGENOM" id="CLU_013615_0_2_6"/>
<dbReference type="Proteomes" id="UP000000416">
    <property type="component" value="Chromosome"/>
</dbReference>
<dbReference type="GO" id="GO:0003755">
    <property type="term" value="F:peptidyl-prolyl cis-trans isomerase activity"/>
    <property type="evidence" value="ECO:0007669"/>
    <property type="project" value="UniProtKB-KW"/>
</dbReference>
<dbReference type="GO" id="GO:0006457">
    <property type="term" value="P:protein folding"/>
    <property type="evidence" value="ECO:0007669"/>
    <property type="project" value="InterPro"/>
</dbReference>
<dbReference type="Gene3D" id="3.10.50.40">
    <property type="match status" value="1"/>
</dbReference>
<dbReference type="Gene3D" id="1.10.287.460">
    <property type="entry name" value="Peptidyl-prolyl cis-trans isomerase, FKBP-type, N-terminal domain"/>
    <property type="match status" value="1"/>
</dbReference>
<dbReference type="InterPro" id="IPR046357">
    <property type="entry name" value="PPIase_dom_sf"/>
</dbReference>
<dbReference type="InterPro" id="IPR001179">
    <property type="entry name" value="PPIase_FKBP_dom"/>
</dbReference>
<dbReference type="InterPro" id="IPR000774">
    <property type="entry name" value="PPIase_FKBP_N"/>
</dbReference>
<dbReference type="InterPro" id="IPR036944">
    <property type="entry name" value="PPIase_FKBP_N_sf"/>
</dbReference>
<dbReference type="NCBIfam" id="NF008150">
    <property type="entry name" value="PRK10902.1"/>
    <property type="match status" value="1"/>
</dbReference>
<dbReference type="PANTHER" id="PTHR43811:SF19">
    <property type="entry name" value="39 KDA FK506-BINDING NUCLEAR PROTEIN"/>
    <property type="match status" value="1"/>
</dbReference>
<dbReference type="PANTHER" id="PTHR43811">
    <property type="entry name" value="FKBP-TYPE PEPTIDYL-PROLYL CIS-TRANS ISOMERASE FKPA"/>
    <property type="match status" value="1"/>
</dbReference>
<dbReference type="Pfam" id="PF00254">
    <property type="entry name" value="FKBP_C"/>
    <property type="match status" value="1"/>
</dbReference>
<dbReference type="Pfam" id="PF01346">
    <property type="entry name" value="FKBP_N"/>
    <property type="match status" value="1"/>
</dbReference>
<dbReference type="SUPFAM" id="SSF54534">
    <property type="entry name" value="FKBP-like"/>
    <property type="match status" value="1"/>
</dbReference>
<dbReference type="PROSITE" id="PS50059">
    <property type="entry name" value="FKBP_PPIASE"/>
    <property type="match status" value="1"/>
</dbReference>
<proteinExistence type="inferred from homology"/>
<gene>
    <name type="primary">fkpA</name>
    <name type="ordered locus">BUsg_514</name>
</gene>
<comment type="function">
    <text>PPIases accelerate the folding of proteins. It catalyzes the cis-trans isomerization of proline imidic peptide bonds in oligopeptides.</text>
</comment>
<comment type="catalytic activity">
    <reaction>
        <text>[protein]-peptidylproline (omega=180) = [protein]-peptidylproline (omega=0)</text>
        <dbReference type="Rhea" id="RHEA:16237"/>
        <dbReference type="Rhea" id="RHEA-COMP:10747"/>
        <dbReference type="Rhea" id="RHEA-COMP:10748"/>
        <dbReference type="ChEBI" id="CHEBI:83833"/>
        <dbReference type="ChEBI" id="CHEBI:83834"/>
        <dbReference type="EC" id="5.2.1.8"/>
    </reaction>
</comment>
<comment type="similarity">
    <text evidence="2">Belongs to the FKBP-type PPIase family.</text>
</comment>
<organism>
    <name type="scientific">Buchnera aphidicola subsp. Schizaphis graminum (strain Sg)</name>
    <dbReference type="NCBI Taxonomy" id="198804"/>
    <lineage>
        <taxon>Bacteria</taxon>
        <taxon>Pseudomonadati</taxon>
        <taxon>Pseudomonadota</taxon>
        <taxon>Gammaproteobacteria</taxon>
        <taxon>Enterobacterales</taxon>
        <taxon>Erwiniaceae</taxon>
        <taxon>Buchnera</taxon>
    </lineage>
</organism>
<sequence length="252" mass="28737">MIVFLLKRILLLYLIFFVPKSFSENLPFFKIKSYSEKKEFFQNDNEKVGYSLGVSLGNYVNESFERQKKMGINLDKYNILLGVQDAISGNLKLSNEEISTILQKLEKNLKNAAKIEFEKSEKENLIQGKLYMKKFSEMKGVSKTSSGLLYIIDKLGEGEEIKTKNAEITVHYKGSLINGTEFDSSYKRGKPITLMLKDVILGWQEGLKYIKKGGKIKLIIPPNLGYGSNRINEIPANSILIFDIELLDIKNI</sequence>
<keyword id="KW-0413">Isomerase</keyword>
<keyword id="KW-0697">Rotamase</keyword>
<reference key="1">
    <citation type="journal article" date="2002" name="Science">
        <title>50 million years of genomic stasis in endosymbiotic bacteria.</title>
        <authorList>
            <person name="Tamas I."/>
            <person name="Klasson L."/>
            <person name="Canbaeck B."/>
            <person name="Naeslund A.K."/>
            <person name="Eriksson A.-S."/>
            <person name="Wernegreen J.J."/>
            <person name="Sandstroem J.P."/>
            <person name="Moran N.A."/>
            <person name="Andersson S.G.E."/>
        </authorList>
    </citation>
    <scope>NUCLEOTIDE SEQUENCE [LARGE SCALE GENOMIC DNA]</scope>
    <source>
        <strain>Sg</strain>
    </source>
</reference>
<evidence type="ECO:0000255" key="1">
    <source>
        <dbReference type="PROSITE-ProRule" id="PRU00277"/>
    </source>
</evidence>
<evidence type="ECO:0000305" key="2"/>
<protein>
    <recommendedName>
        <fullName>FKBP-type peptidyl-prolyl cis-trans isomerase FkpA</fullName>
        <shortName>PPIase</shortName>
        <ecNumber>5.2.1.8</ecNumber>
    </recommendedName>
    <alternativeName>
        <fullName>Rotamase</fullName>
    </alternativeName>
</protein>
<name>FKBA_BUCAP</name>